<comment type="catalytic activity">
    <reaction evidence="1">
        <text>uridine + ATP = UMP + ADP + H(+)</text>
        <dbReference type="Rhea" id="RHEA:16825"/>
        <dbReference type="ChEBI" id="CHEBI:15378"/>
        <dbReference type="ChEBI" id="CHEBI:16704"/>
        <dbReference type="ChEBI" id="CHEBI:30616"/>
        <dbReference type="ChEBI" id="CHEBI:57865"/>
        <dbReference type="ChEBI" id="CHEBI:456216"/>
        <dbReference type="EC" id="2.7.1.48"/>
    </reaction>
</comment>
<comment type="catalytic activity">
    <reaction evidence="1">
        <text>cytidine + ATP = CMP + ADP + H(+)</text>
        <dbReference type="Rhea" id="RHEA:24674"/>
        <dbReference type="ChEBI" id="CHEBI:15378"/>
        <dbReference type="ChEBI" id="CHEBI:17562"/>
        <dbReference type="ChEBI" id="CHEBI:30616"/>
        <dbReference type="ChEBI" id="CHEBI:60377"/>
        <dbReference type="ChEBI" id="CHEBI:456216"/>
        <dbReference type="EC" id="2.7.1.48"/>
    </reaction>
</comment>
<comment type="pathway">
    <text evidence="1">Pyrimidine metabolism; CTP biosynthesis via salvage pathway; CTP from cytidine: step 1/3.</text>
</comment>
<comment type="pathway">
    <text evidence="1">Pyrimidine metabolism; UMP biosynthesis via salvage pathway; UMP from uridine: step 1/1.</text>
</comment>
<comment type="subcellular location">
    <subcellularLocation>
        <location evidence="1">Cytoplasm</location>
    </subcellularLocation>
</comment>
<comment type="similarity">
    <text evidence="1">Belongs to the uridine kinase family.</text>
</comment>
<organism>
    <name type="scientific">Thermus thermophilus (strain ATCC BAA-163 / DSM 7039 / HB27)</name>
    <dbReference type="NCBI Taxonomy" id="262724"/>
    <lineage>
        <taxon>Bacteria</taxon>
        <taxon>Thermotogati</taxon>
        <taxon>Deinococcota</taxon>
        <taxon>Deinococci</taxon>
        <taxon>Thermales</taxon>
        <taxon>Thermaceae</taxon>
        <taxon>Thermus</taxon>
    </lineage>
</organism>
<evidence type="ECO:0000255" key="1">
    <source>
        <dbReference type="HAMAP-Rule" id="MF_00551"/>
    </source>
</evidence>
<dbReference type="EC" id="2.7.1.48" evidence="1"/>
<dbReference type="EMBL" id="AE017221">
    <property type="protein sequence ID" value="AAS80558.1"/>
    <property type="molecule type" value="Genomic_DNA"/>
</dbReference>
<dbReference type="RefSeq" id="WP_011172663.1">
    <property type="nucleotide sequence ID" value="NC_005835.1"/>
</dbReference>
<dbReference type="SMR" id="Q72L53"/>
<dbReference type="GeneID" id="3168643"/>
<dbReference type="KEGG" id="tth:TT_C0210"/>
<dbReference type="eggNOG" id="COG0572">
    <property type="taxonomic scope" value="Bacteria"/>
</dbReference>
<dbReference type="HOGENOM" id="CLU_021278_1_2_0"/>
<dbReference type="OrthoDB" id="9777642at2"/>
<dbReference type="UniPathway" id="UPA00574">
    <property type="reaction ID" value="UER00637"/>
</dbReference>
<dbReference type="UniPathway" id="UPA00579">
    <property type="reaction ID" value="UER00640"/>
</dbReference>
<dbReference type="Proteomes" id="UP000000592">
    <property type="component" value="Chromosome"/>
</dbReference>
<dbReference type="GO" id="GO:0005737">
    <property type="term" value="C:cytoplasm"/>
    <property type="evidence" value="ECO:0007669"/>
    <property type="project" value="UniProtKB-SubCell"/>
</dbReference>
<dbReference type="GO" id="GO:0005524">
    <property type="term" value="F:ATP binding"/>
    <property type="evidence" value="ECO:0007669"/>
    <property type="project" value="UniProtKB-UniRule"/>
</dbReference>
<dbReference type="GO" id="GO:0043771">
    <property type="term" value="F:cytidine kinase activity"/>
    <property type="evidence" value="ECO:0007669"/>
    <property type="project" value="RHEA"/>
</dbReference>
<dbReference type="GO" id="GO:0004849">
    <property type="term" value="F:uridine kinase activity"/>
    <property type="evidence" value="ECO:0007669"/>
    <property type="project" value="UniProtKB-UniRule"/>
</dbReference>
<dbReference type="GO" id="GO:0044211">
    <property type="term" value="P:CTP salvage"/>
    <property type="evidence" value="ECO:0007669"/>
    <property type="project" value="UniProtKB-UniRule"/>
</dbReference>
<dbReference type="GO" id="GO:0044206">
    <property type="term" value="P:UMP salvage"/>
    <property type="evidence" value="ECO:0007669"/>
    <property type="project" value="UniProtKB-UniRule"/>
</dbReference>
<dbReference type="CDD" id="cd02023">
    <property type="entry name" value="UMPK"/>
    <property type="match status" value="1"/>
</dbReference>
<dbReference type="Gene3D" id="3.40.50.300">
    <property type="entry name" value="P-loop containing nucleotide triphosphate hydrolases"/>
    <property type="match status" value="1"/>
</dbReference>
<dbReference type="HAMAP" id="MF_00551">
    <property type="entry name" value="Uridine_kinase"/>
    <property type="match status" value="1"/>
</dbReference>
<dbReference type="InterPro" id="IPR027417">
    <property type="entry name" value="P-loop_NTPase"/>
</dbReference>
<dbReference type="InterPro" id="IPR006083">
    <property type="entry name" value="PRK/URK"/>
</dbReference>
<dbReference type="InterPro" id="IPR026008">
    <property type="entry name" value="Uridine_kinase"/>
</dbReference>
<dbReference type="InterPro" id="IPR000764">
    <property type="entry name" value="Uridine_kinase-like"/>
</dbReference>
<dbReference type="NCBIfam" id="NF004018">
    <property type="entry name" value="PRK05480.1"/>
    <property type="match status" value="1"/>
</dbReference>
<dbReference type="NCBIfam" id="TIGR00235">
    <property type="entry name" value="udk"/>
    <property type="match status" value="1"/>
</dbReference>
<dbReference type="PANTHER" id="PTHR10285">
    <property type="entry name" value="URIDINE KINASE"/>
    <property type="match status" value="1"/>
</dbReference>
<dbReference type="Pfam" id="PF00485">
    <property type="entry name" value="PRK"/>
    <property type="match status" value="1"/>
</dbReference>
<dbReference type="PRINTS" id="PR00988">
    <property type="entry name" value="URIDINKINASE"/>
</dbReference>
<dbReference type="SUPFAM" id="SSF52540">
    <property type="entry name" value="P-loop containing nucleoside triphosphate hydrolases"/>
    <property type="match status" value="1"/>
</dbReference>
<keyword id="KW-0067">ATP-binding</keyword>
<keyword id="KW-0963">Cytoplasm</keyword>
<keyword id="KW-0418">Kinase</keyword>
<keyword id="KW-0547">Nucleotide-binding</keyword>
<keyword id="KW-0808">Transferase</keyword>
<gene>
    <name evidence="1" type="primary">udk</name>
    <name type="ordered locus">TT_C0210</name>
</gene>
<feature type="chain" id="PRO_1000081977" description="Uridine kinase">
    <location>
        <begin position="1"/>
        <end position="211"/>
    </location>
</feature>
<feature type="binding site" evidence="1">
    <location>
        <begin position="13"/>
        <end position="20"/>
    </location>
    <ligand>
        <name>ATP</name>
        <dbReference type="ChEBI" id="CHEBI:30616"/>
    </ligand>
</feature>
<reference key="1">
    <citation type="journal article" date="2004" name="Nat. Biotechnol.">
        <title>The genome sequence of the extreme thermophile Thermus thermophilus.</title>
        <authorList>
            <person name="Henne A."/>
            <person name="Brueggemann H."/>
            <person name="Raasch C."/>
            <person name="Wiezer A."/>
            <person name="Hartsch T."/>
            <person name="Liesegang H."/>
            <person name="Johann A."/>
            <person name="Lienard T."/>
            <person name="Gohl O."/>
            <person name="Martinez-Arias R."/>
            <person name="Jacobi C."/>
            <person name="Starkuviene V."/>
            <person name="Schlenczeck S."/>
            <person name="Dencker S."/>
            <person name="Huber R."/>
            <person name="Klenk H.-P."/>
            <person name="Kramer W."/>
            <person name="Merkl R."/>
            <person name="Gottschalk G."/>
            <person name="Fritz H.-J."/>
        </authorList>
    </citation>
    <scope>NUCLEOTIDE SEQUENCE [LARGE SCALE GENOMIC DNA]</scope>
    <source>
        <strain>ATCC BAA-163 / DSM 7039 / HB27</strain>
    </source>
</reference>
<proteinExistence type="inferred from homology"/>
<sequence length="211" mass="23674">MSAPKPFVIGIAGGTASGKTTLAQALARTLGERVALLPMDHYYKDLGHLPLEERLRVNYDHPDAFDLALYLEHAQALLRGLPVEMPVYDFRAYTRSPRRTPVRPAPVVILEGILVLYPKELRDLMDLKVFVDADADERFIRRLKRDVLERGRSLEGVVAQYLEQVKPMHLHFVEPTKRYADVIVPRGGQNPVALEMLAAKALARLARMGAA</sequence>
<accession>Q72L53</accession>
<protein>
    <recommendedName>
        <fullName evidence="1">Uridine kinase</fullName>
        <ecNumber evidence="1">2.7.1.48</ecNumber>
    </recommendedName>
    <alternativeName>
        <fullName evidence="1">Cytidine monophosphokinase</fullName>
    </alternativeName>
    <alternativeName>
        <fullName evidence="1">Uridine monophosphokinase</fullName>
    </alternativeName>
</protein>
<name>URK_THET2</name>